<dbReference type="EC" id="3.4.21.-" evidence="7"/>
<dbReference type="EMBL" id="AB022219">
    <property type="protein sequence ID" value="BAB02051.1"/>
    <property type="status" value="ALT_SEQ"/>
    <property type="molecule type" value="Genomic_DNA"/>
</dbReference>
<dbReference type="EMBL" id="CP002686">
    <property type="protein sequence ID" value="AEE75978.1"/>
    <property type="molecule type" value="Genomic_DNA"/>
</dbReference>
<dbReference type="EMBL" id="CP002686">
    <property type="protein sequence ID" value="AEE75979.1"/>
    <property type="molecule type" value="Genomic_DNA"/>
</dbReference>
<dbReference type="EMBL" id="CP002686">
    <property type="protein sequence ID" value="AEE75980.1"/>
    <property type="molecule type" value="Genomic_DNA"/>
</dbReference>
<dbReference type="EMBL" id="AY080647">
    <property type="protein sequence ID" value="AAL85014.1"/>
    <property type="molecule type" value="mRNA"/>
</dbReference>
<dbReference type="EMBL" id="AY117194">
    <property type="protein sequence ID" value="AAM51269.1"/>
    <property type="molecule type" value="mRNA"/>
</dbReference>
<dbReference type="EMBL" id="AK175222">
    <property type="protein sequence ID" value="BAD42985.1"/>
    <property type="molecule type" value="mRNA"/>
</dbReference>
<dbReference type="RefSeq" id="NP_001078170.1">
    <molecule id="Q8RXW0-3"/>
    <property type="nucleotide sequence ID" value="NM_001084701.1"/>
</dbReference>
<dbReference type="RefSeq" id="NP_850606.1">
    <molecule id="Q8RXW0-1"/>
    <property type="nucleotide sequence ID" value="NM_180275.3"/>
</dbReference>
<dbReference type="RefSeq" id="NP_974329.1">
    <molecule id="Q8RXW0-2"/>
    <property type="nucleotide sequence ID" value="NM_202600.1"/>
</dbReference>
<dbReference type="BioGRID" id="6361">
    <property type="interactions" value="6"/>
</dbReference>
<dbReference type="FunCoup" id="Q8RXW0">
    <property type="interactions" value="2018"/>
</dbReference>
<dbReference type="IntAct" id="Q8RXW0">
    <property type="interactions" value="6"/>
</dbReference>
<dbReference type="STRING" id="3702.Q8RXW0"/>
<dbReference type="iPTMnet" id="Q8RXW0"/>
<dbReference type="PaxDb" id="3702-AT3G17611.1"/>
<dbReference type="ProteomicsDB" id="236473">
    <molecule id="Q8RXW0-1"/>
</dbReference>
<dbReference type="EnsemblPlants" id="AT3G17611.1">
    <molecule id="Q8RXW0-1"/>
    <property type="protein sequence ID" value="AT3G17611.1"/>
    <property type="gene ID" value="AT3G17611"/>
</dbReference>
<dbReference type="EnsemblPlants" id="AT3G17611.2">
    <molecule id="Q8RXW0-2"/>
    <property type="protein sequence ID" value="AT3G17611.2"/>
    <property type="gene ID" value="AT3G17611"/>
</dbReference>
<dbReference type="EnsemblPlants" id="AT3G17611.3">
    <molecule id="Q8RXW0-3"/>
    <property type="protein sequence ID" value="AT3G17611.3"/>
    <property type="gene ID" value="AT3G17611"/>
</dbReference>
<dbReference type="GeneID" id="821028"/>
<dbReference type="Gramene" id="AT3G17611.1">
    <molecule id="Q8RXW0-1"/>
    <property type="protein sequence ID" value="AT3G17611.1"/>
    <property type="gene ID" value="AT3G17611"/>
</dbReference>
<dbReference type="Gramene" id="AT3G17611.2">
    <molecule id="Q8RXW0-2"/>
    <property type="protein sequence ID" value="AT3G17611.2"/>
    <property type="gene ID" value="AT3G17611"/>
</dbReference>
<dbReference type="Gramene" id="AT3G17611.3">
    <molecule id="Q8RXW0-3"/>
    <property type="protein sequence ID" value="AT3G17611.3"/>
    <property type="gene ID" value="AT3G17611"/>
</dbReference>
<dbReference type="KEGG" id="ath:AT3G17611"/>
<dbReference type="Araport" id="AT3G17611"/>
<dbReference type="TAIR" id="AT3G17611">
    <property type="gene designation" value="RBL14"/>
</dbReference>
<dbReference type="eggNOG" id="KOG2632">
    <property type="taxonomic scope" value="Eukaryota"/>
</dbReference>
<dbReference type="HOGENOM" id="CLU_056643_0_0_1"/>
<dbReference type="InParanoid" id="Q8RXW0"/>
<dbReference type="OMA" id="GLMALMY"/>
<dbReference type="OrthoDB" id="10257275at2759"/>
<dbReference type="PhylomeDB" id="Q8RXW0"/>
<dbReference type="PRO" id="PR:Q8RXW0"/>
<dbReference type="Proteomes" id="UP000006548">
    <property type="component" value="Chromosome 3"/>
</dbReference>
<dbReference type="ExpressionAtlas" id="Q8RXW0">
    <property type="expression patterns" value="baseline and differential"/>
</dbReference>
<dbReference type="GO" id="GO:0031966">
    <property type="term" value="C:mitochondrial membrane"/>
    <property type="evidence" value="ECO:0007669"/>
    <property type="project" value="UniProtKB-SubCell"/>
</dbReference>
<dbReference type="GO" id="GO:0005886">
    <property type="term" value="C:plasma membrane"/>
    <property type="evidence" value="ECO:0000314"/>
    <property type="project" value="TAIR"/>
</dbReference>
<dbReference type="GO" id="GO:0004252">
    <property type="term" value="F:serine-type endopeptidase activity"/>
    <property type="evidence" value="ECO:0007669"/>
    <property type="project" value="InterPro"/>
</dbReference>
<dbReference type="GO" id="GO:0008270">
    <property type="term" value="F:zinc ion binding"/>
    <property type="evidence" value="ECO:0007669"/>
    <property type="project" value="UniProtKB-KW"/>
</dbReference>
<dbReference type="GO" id="GO:0006508">
    <property type="term" value="P:proteolysis"/>
    <property type="evidence" value="ECO:0007669"/>
    <property type="project" value="UniProtKB-KW"/>
</dbReference>
<dbReference type="FunFam" id="1.20.1540.10:FF:000026">
    <property type="entry name" value="Rhomboid-like protein 14, mitochondrial"/>
    <property type="match status" value="1"/>
</dbReference>
<dbReference type="Gene3D" id="1.20.1540.10">
    <property type="entry name" value="Rhomboid-like"/>
    <property type="match status" value="1"/>
</dbReference>
<dbReference type="Gene3D" id="2.30.30.380">
    <property type="entry name" value="Zn-finger domain of Sec23/24"/>
    <property type="match status" value="1"/>
</dbReference>
<dbReference type="InterPro" id="IPR022764">
    <property type="entry name" value="Peptidase_S54_rhomboid_dom"/>
</dbReference>
<dbReference type="InterPro" id="IPR035952">
    <property type="entry name" value="Rhomboid-like_sf"/>
</dbReference>
<dbReference type="InterPro" id="IPR001876">
    <property type="entry name" value="Znf_RanBP2"/>
</dbReference>
<dbReference type="InterPro" id="IPR036443">
    <property type="entry name" value="Znf_RanBP2_sf"/>
</dbReference>
<dbReference type="PANTHER" id="PTHR43066:SF1">
    <property type="entry name" value="RHOMBOID PROTEIN 2"/>
    <property type="match status" value="1"/>
</dbReference>
<dbReference type="PANTHER" id="PTHR43066">
    <property type="entry name" value="RHOMBOID-RELATED PROTEIN"/>
    <property type="match status" value="1"/>
</dbReference>
<dbReference type="Pfam" id="PF01694">
    <property type="entry name" value="Rhomboid"/>
    <property type="match status" value="1"/>
</dbReference>
<dbReference type="Pfam" id="PF00641">
    <property type="entry name" value="Zn_ribbon_RanBP"/>
    <property type="match status" value="1"/>
</dbReference>
<dbReference type="SMART" id="SM00547">
    <property type="entry name" value="ZnF_RBZ"/>
    <property type="match status" value="1"/>
</dbReference>
<dbReference type="SUPFAM" id="SSF90209">
    <property type="entry name" value="Ran binding protein zinc finger-like"/>
    <property type="match status" value="1"/>
</dbReference>
<dbReference type="SUPFAM" id="SSF144091">
    <property type="entry name" value="Rhomboid-like"/>
    <property type="match status" value="1"/>
</dbReference>
<dbReference type="PROSITE" id="PS01358">
    <property type="entry name" value="ZF_RANBP2_1"/>
    <property type="match status" value="1"/>
</dbReference>
<dbReference type="PROSITE" id="PS50199">
    <property type="entry name" value="ZF_RANBP2_2"/>
    <property type="match status" value="1"/>
</dbReference>
<comment type="function">
    <text evidence="6">Probable rhomboid-type serine protease that catalyzes intramembrane proteolysis. May function in the heat-shock response pathway.</text>
</comment>
<comment type="subcellular location">
    <subcellularLocation>
        <location evidence="7">Mitochondrion membrane</location>
        <topology evidence="7">Multi-pass membrane protein</topology>
    </subcellularLocation>
    <text evidence="8">Might be neither mitochondrial nor chloroplastic.</text>
</comment>
<comment type="alternative products">
    <event type="alternative splicing"/>
    <isoform>
        <id>Q8RXW0-1</id>
        <name>1</name>
        <sequence type="displayed"/>
    </isoform>
    <isoform>
        <id>Q8RXW0-2</id>
        <name>2</name>
        <sequence type="described" ref="VSP_057724"/>
    </isoform>
    <isoform>
        <id>Q8RXW0-3</id>
        <name>3</name>
        <sequence type="described" ref="VSP_057723"/>
    </isoform>
</comment>
<comment type="similarity">
    <text evidence="7">Belongs to the peptidase S54 family.</text>
</comment>
<comment type="sequence caution" evidence="7">
    <conflict type="erroneous gene model prediction">
        <sequence resource="EMBL-CDS" id="BAB02051"/>
    </conflict>
    <text>The predicted gene At3g17610 has been split into 2 genes: At3g17609 and At3g17611.</text>
</comment>
<sequence length="334" mass="37150">MENFGEGRRSGGGMLPLLALSAVAEYYRLPWKPPVTASLLAANTLVYLRPAFIDPVIPHISEVWFNPHLIFKHKDLKRLFLSAFYHVNEPHLVYNMMSLLWKGIKLETSMGSSEFASMVFTLIGMSQGVTLLLAKSLLLLFDYDRAYYNEYAVGFSGVLFAMKVVLNSQAEDYSSVYGILVPTKYAAWAELILVQMFVPNASFLGHLGGILAGIIYLKLKGSYSGSDPVTMAVRGVSRLVTWPLRFLNGMVRSRRRRITGRGRVGRGQTGIAGPGIWRCQSCTYDNSGWLSACEMCGSGRARGNGWSLNQGPALSSSNDLPLDELRRRRVERFS</sequence>
<evidence type="ECO:0000250" key="1">
    <source>
        <dbReference type="UniProtKB" id="P54493"/>
    </source>
</evidence>
<evidence type="ECO:0000255" key="2"/>
<evidence type="ECO:0000255" key="3">
    <source>
        <dbReference type="PROSITE-ProRule" id="PRU00322"/>
    </source>
</evidence>
<evidence type="ECO:0000303" key="4">
    <source>
    </source>
</evidence>
<evidence type="ECO:0000303" key="5">
    <source>
    </source>
</evidence>
<evidence type="ECO:0000303" key="6">
    <source>
    </source>
</evidence>
<evidence type="ECO:0000305" key="7"/>
<evidence type="ECO:0000305" key="8">
    <source>
    </source>
</evidence>
<evidence type="ECO:0000312" key="9">
    <source>
        <dbReference type="Araport" id="AT3G17611"/>
    </source>
</evidence>
<evidence type="ECO:0000312" key="10">
    <source>
        <dbReference type="EMBL" id="BAB02051.1"/>
    </source>
</evidence>
<reference key="1">
    <citation type="journal article" date="2000" name="DNA Res.">
        <title>Structural analysis of Arabidopsis thaliana chromosome 3. I. Sequence features of the regions of 4,504,864 bp covered by sixty P1 and TAC clones.</title>
        <authorList>
            <person name="Sato S."/>
            <person name="Nakamura Y."/>
            <person name="Kaneko T."/>
            <person name="Katoh T."/>
            <person name="Asamizu E."/>
            <person name="Tabata S."/>
        </authorList>
    </citation>
    <scope>NUCLEOTIDE SEQUENCE [LARGE SCALE GENOMIC DNA]</scope>
    <source>
        <strain>cv. Columbia</strain>
    </source>
</reference>
<reference key="2">
    <citation type="journal article" date="2017" name="Plant J.">
        <title>Araport11: a complete reannotation of the Arabidopsis thaliana reference genome.</title>
        <authorList>
            <person name="Cheng C.Y."/>
            <person name="Krishnakumar V."/>
            <person name="Chan A.P."/>
            <person name="Thibaud-Nissen F."/>
            <person name="Schobel S."/>
            <person name="Town C.D."/>
        </authorList>
    </citation>
    <scope>GENOME REANNOTATION</scope>
    <source>
        <strain>cv. Columbia</strain>
    </source>
</reference>
<reference key="3">
    <citation type="journal article" date="2003" name="Science">
        <title>Empirical analysis of transcriptional activity in the Arabidopsis genome.</title>
        <authorList>
            <person name="Yamada K."/>
            <person name="Lim J."/>
            <person name="Dale J.M."/>
            <person name="Chen H."/>
            <person name="Shinn P."/>
            <person name="Palm C.J."/>
            <person name="Southwick A.M."/>
            <person name="Wu H.C."/>
            <person name="Kim C.J."/>
            <person name="Nguyen M."/>
            <person name="Pham P.K."/>
            <person name="Cheuk R.F."/>
            <person name="Karlin-Newmann G."/>
            <person name="Liu S.X."/>
            <person name="Lam B."/>
            <person name="Sakano H."/>
            <person name="Wu T."/>
            <person name="Yu G."/>
            <person name="Miranda M."/>
            <person name="Quach H.L."/>
            <person name="Tripp M."/>
            <person name="Chang C.H."/>
            <person name="Lee J.M."/>
            <person name="Toriumi M.J."/>
            <person name="Chan M.M."/>
            <person name="Tang C.C."/>
            <person name="Onodera C.S."/>
            <person name="Deng J.M."/>
            <person name="Akiyama K."/>
            <person name="Ansari Y."/>
            <person name="Arakawa T."/>
            <person name="Banh J."/>
            <person name="Banno F."/>
            <person name="Bowser L."/>
            <person name="Brooks S.Y."/>
            <person name="Carninci P."/>
            <person name="Chao Q."/>
            <person name="Choy N."/>
            <person name="Enju A."/>
            <person name="Goldsmith A.D."/>
            <person name="Gurjal M."/>
            <person name="Hansen N.F."/>
            <person name="Hayashizaki Y."/>
            <person name="Johnson-Hopson C."/>
            <person name="Hsuan V.W."/>
            <person name="Iida K."/>
            <person name="Karnes M."/>
            <person name="Khan S."/>
            <person name="Koesema E."/>
            <person name="Ishida J."/>
            <person name="Jiang P.X."/>
            <person name="Jones T."/>
            <person name="Kawai J."/>
            <person name="Kamiya A."/>
            <person name="Meyers C."/>
            <person name="Nakajima M."/>
            <person name="Narusaka M."/>
            <person name="Seki M."/>
            <person name="Sakurai T."/>
            <person name="Satou M."/>
            <person name="Tamse R."/>
            <person name="Vaysberg M."/>
            <person name="Wallender E.K."/>
            <person name="Wong C."/>
            <person name="Yamamura Y."/>
            <person name="Yuan S."/>
            <person name="Shinozaki K."/>
            <person name="Davis R.W."/>
            <person name="Theologis A."/>
            <person name="Ecker J.R."/>
        </authorList>
    </citation>
    <scope>NUCLEOTIDE SEQUENCE [LARGE SCALE MRNA] (ISOFORM 1)</scope>
    <source>
        <strain>cv. Columbia</strain>
    </source>
</reference>
<reference key="4">
    <citation type="submission" date="2004-09" db="EMBL/GenBank/DDBJ databases">
        <title>Large-scale analysis of RIKEN Arabidopsis full-length (RAFL) cDNAs.</title>
        <authorList>
            <person name="Totoki Y."/>
            <person name="Seki M."/>
            <person name="Ishida J."/>
            <person name="Nakajima M."/>
            <person name="Enju A."/>
            <person name="Kamiya A."/>
            <person name="Narusaka M."/>
            <person name="Shin-i T."/>
            <person name="Nakagawa M."/>
            <person name="Sakamoto N."/>
            <person name="Oishi K."/>
            <person name="Kohara Y."/>
            <person name="Kobayashi M."/>
            <person name="Toyoda A."/>
            <person name="Sakaki Y."/>
            <person name="Sakurai T."/>
            <person name="Iida K."/>
            <person name="Akiyama K."/>
            <person name="Satou M."/>
            <person name="Toyoda T."/>
            <person name="Konagaya A."/>
            <person name="Carninci P."/>
            <person name="Kawai J."/>
            <person name="Hayashizaki Y."/>
            <person name="Shinozaki K."/>
        </authorList>
    </citation>
    <scope>NUCLEOTIDE SEQUENCE [LARGE SCALE MRNA] OF 196-334</scope>
    <source>
        <strain>cv. Columbia</strain>
    </source>
</reference>
<reference key="5">
    <citation type="journal article" date="2006" name="BMC Genomics">
        <title>Cross genome comparisons of serine proteases in Arabidopsis and rice.</title>
        <authorList>
            <person name="Tripathi L.P."/>
            <person name="Sowdhamini R."/>
        </authorList>
    </citation>
    <scope>GENE FAMILY</scope>
    <scope>NOMENCLATURE</scope>
</reference>
<reference key="6">
    <citation type="journal article" date="2006" name="BMC Plant Biol.">
        <title>Protease gene families in Populus and Arabidopsis.</title>
        <authorList>
            <person name="Garcia-Lorenzo M."/>
            <person name="Sjodin A."/>
            <person name="Jansson S."/>
            <person name="Funk C."/>
        </authorList>
    </citation>
    <scope>GENE FAMILY</scope>
    <scope>NOMENCLATURE</scope>
</reference>
<reference key="7">
    <citation type="journal article" date="2007" name="Genome Res.">
        <title>Functional and evolutionary implications of enhanced genomic analysis of rhomboid intramembrane proteases.</title>
        <authorList>
            <person name="Lemberg M.K."/>
            <person name="Freeman M."/>
        </authorList>
    </citation>
    <scope>GENE FAMILY</scope>
    <scope>NOMENCLATURE</scope>
</reference>
<reference key="8">
    <citation type="journal article" date="2008" name="Plant Mol. Biol.">
        <title>Plant mitochondrial rhomboid, AtRBL12, has different substrate specificity from its yeast counterpart.</title>
        <authorList>
            <person name="Kmiec-Wisniewska B."/>
            <person name="Krumpe K."/>
            <person name="Urantowka A."/>
            <person name="Sakamoto W."/>
            <person name="Pratje E."/>
            <person name="Janska H."/>
        </authorList>
    </citation>
    <scope>SUBCELLULAR LOCATION</scope>
</reference>
<reference key="9">
    <citation type="journal article" date="2012" name="Physiol. Plantarum">
        <title>Rhomboid proteases in plants - still in square one?</title>
        <authorList>
            <person name="Knopf R.R."/>
            <person name="Adam Z."/>
        </authorList>
    </citation>
    <scope>REVIEW</scope>
</reference>
<keyword id="KW-0025">Alternative splicing</keyword>
<keyword id="KW-0378">Hydrolase</keyword>
<keyword id="KW-0472">Membrane</keyword>
<keyword id="KW-0479">Metal-binding</keyword>
<keyword id="KW-0496">Mitochondrion</keyword>
<keyword id="KW-0645">Protease</keyword>
<keyword id="KW-1185">Reference proteome</keyword>
<keyword id="KW-0809">Transit peptide</keyword>
<keyword id="KW-0812">Transmembrane</keyword>
<keyword id="KW-1133">Transmembrane helix</keyword>
<keyword id="KW-0862">Zinc</keyword>
<keyword id="KW-0863">Zinc-finger</keyword>
<proteinExistence type="evidence at transcript level"/>
<name>RBL14_ARATH</name>
<accession>Q8RXW0</accession>
<accession>A8MS64</accession>
<accession>Q27GK6</accession>
<accession>Q682Z5</accession>
<protein>
    <recommendedName>
        <fullName evidence="4">Rhomboid-like protein 14, mitochondrial</fullName>
        <shortName evidence="4">AtRBL14</shortName>
        <ecNumber evidence="7">3.4.21.-</ecNumber>
    </recommendedName>
</protein>
<feature type="transit peptide" description="Mitochondrion" evidence="2">
    <location>
        <begin position="1"/>
        <end position="87"/>
    </location>
</feature>
<feature type="chain" id="PRO_0000223928" description="Rhomboid-like protein 14, mitochondrial">
    <location>
        <begin position="88"/>
        <end position="334"/>
    </location>
</feature>
<feature type="transmembrane region" description="Helical" evidence="2">
    <location>
        <begin position="114"/>
        <end position="134"/>
    </location>
</feature>
<feature type="transmembrane region" description="Helical" evidence="2">
    <location>
        <begin position="146"/>
        <end position="166"/>
    </location>
</feature>
<feature type="transmembrane region" description="Helical" evidence="2">
    <location>
        <begin position="176"/>
        <end position="196"/>
    </location>
</feature>
<feature type="transmembrane region" description="Helical" evidence="2">
    <location>
        <begin position="197"/>
        <end position="217"/>
    </location>
</feature>
<feature type="zinc finger region" description="RanBP2-type" evidence="3">
    <location>
        <begin position="273"/>
        <end position="302"/>
    </location>
</feature>
<feature type="active site" description="Nucleophile" evidence="1">
    <location>
        <position position="156"/>
    </location>
</feature>
<feature type="active site" description="Charge relay system" evidence="1">
    <location>
        <position position="206"/>
    </location>
</feature>
<feature type="splice variant" id="VSP_057723" description="In isoform 3.">
    <location>
        <begin position="1"/>
        <end position="161"/>
    </location>
</feature>
<feature type="splice variant" id="VSP_057724" description="In isoform 2.">
    <location>
        <begin position="1"/>
        <end position="95"/>
    </location>
</feature>
<gene>
    <name evidence="4" type="primary">RBL14</name>
    <name evidence="5" type="synonym">RBL10</name>
    <name evidence="9" type="ordered locus">At3g17611</name>
    <name evidence="10" type="ORF">MKP6.17</name>
</gene>
<organism>
    <name type="scientific">Arabidopsis thaliana</name>
    <name type="common">Mouse-ear cress</name>
    <dbReference type="NCBI Taxonomy" id="3702"/>
    <lineage>
        <taxon>Eukaryota</taxon>
        <taxon>Viridiplantae</taxon>
        <taxon>Streptophyta</taxon>
        <taxon>Embryophyta</taxon>
        <taxon>Tracheophyta</taxon>
        <taxon>Spermatophyta</taxon>
        <taxon>Magnoliopsida</taxon>
        <taxon>eudicotyledons</taxon>
        <taxon>Gunneridae</taxon>
        <taxon>Pentapetalae</taxon>
        <taxon>rosids</taxon>
        <taxon>malvids</taxon>
        <taxon>Brassicales</taxon>
        <taxon>Brassicaceae</taxon>
        <taxon>Camelineae</taxon>
        <taxon>Arabidopsis</taxon>
    </lineage>
</organism>